<name>MURA_BURMA</name>
<evidence type="ECO:0000255" key="1">
    <source>
        <dbReference type="HAMAP-Rule" id="MF_00111"/>
    </source>
</evidence>
<organism>
    <name type="scientific">Burkholderia mallei (strain ATCC 23344)</name>
    <dbReference type="NCBI Taxonomy" id="243160"/>
    <lineage>
        <taxon>Bacteria</taxon>
        <taxon>Pseudomonadati</taxon>
        <taxon>Pseudomonadota</taxon>
        <taxon>Betaproteobacteria</taxon>
        <taxon>Burkholderiales</taxon>
        <taxon>Burkholderiaceae</taxon>
        <taxon>Burkholderia</taxon>
        <taxon>pseudomallei group</taxon>
    </lineage>
</organism>
<gene>
    <name evidence="1" type="primary">murA</name>
    <name type="ordered locus">BMA2716</name>
</gene>
<comment type="function">
    <text evidence="1">Cell wall formation. Adds enolpyruvyl to UDP-N-acetylglucosamine.</text>
</comment>
<comment type="catalytic activity">
    <reaction evidence="1">
        <text>phosphoenolpyruvate + UDP-N-acetyl-alpha-D-glucosamine = UDP-N-acetyl-3-O-(1-carboxyvinyl)-alpha-D-glucosamine + phosphate</text>
        <dbReference type="Rhea" id="RHEA:18681"/>
        <dbReference type="ChEBI" id="CHEBI:43474"/>
        <dbReference type="ChEBI" id="CHEBI:57705"/>
        <dbReference type="ChEBI" id="CHEBI:58702"/>
        <dbReference type="ChEBI" id="CHEBI:68483"/>
        <dbReference type="EC" id="2.5.1.7"/>
    </reaction>
</comment>
<comment type="pathway">
    <text evidence="1">Cell wall biogenesis; peptidoglycan biosynthesis.</text>
</comment>
<comment type="subcellular location">
    <subcellularLocation>
        <location evidence="1">Cytoplasm</location>
    </subcellularLocation>
</comment>
<comment type="similarity">
    <text evidence="1">Belongs to the EPSP synthase family. MurA subfamily.</text>
</comment>
<dbReference type="EC" id="2.5.1.7" evidence="1"/>
<dbReference type="EMBL" id="CP000010">
    <property type="protein sequence ID" value="AAU48284.1"/>
    <property type="molecule type" value="Genomic_DNA"/>
</dbReference>
<dbReference type="RefSeq" id="WP_004185050.1">
    <property type="nucleotide sequence ID" value="NC_006348.1"/>
</dbReference>
<dbReference type="RefSeq" id="YP_104237.1">
    <property type="nucleotide sequence ID" value="NC_006348.1"/>
</dbReference>
<dbReference type="SMR" id="Q62GD7"/>
<dbReference type="GeneID" id="92980398"/>
<dbReference type="KEGG" id="bma:BMA2716"/>
<dbReference type="PATRIC" id="fig|243160.12.peg.2786"/>
<dbReference type="eggNOG" id="COG0766">
    <property type="taxonomic scope" value="Bacteria"/>
</dbReference>
<dbReference type="HOGENOM" id="CLU_027387_0_0_4"/>
<dbReference type="UniPathway" id="UPA00219"/>
<dbReference type="Proteomes" id="UP000006693">
    <property type="component" value="Chromosome 1"/>
</dbReference>
<dbReference type="GO" id="GO:0005737">
    <property type="term" value="C:cytoplasm"/>
    <property type="evidence" value="ECO:0007669"/>
    <property type="project" value="UniProtKB-SubCell"/>
</dbReference>
<dbReference type="GO" id="GO:0008760">
    <property type="term" value="F:UDP-N-acetylglucosamine 1-carboxyvinyltransferase activity"/>
    <property type="evidence" value="ECO:0007669"/>
    <property type="project" value="UniProtKB-UniRule"/>
</dbReference>
<dbReference type="GO" id="GO:0051301">
    <property type="term" value="P:cell division"/>
    <property type="evidence" value="ECO:0007669"/>
    <property type="project" value="UniProtKB-KW"/>
</dbReference>
<dbReference type="GO" id="GO:0071555">
    <property type="term" value="P:cell wall organization"/>
    <property type="evidence" value="ECO:0007669"/>
    <property type="project" value="UniProtKB-KW"/>
</dbReference>
<dbReference type="GO" id="GO:0009252">
    <property type="term" value="P:peptidoglycan biosynthetic process"/>
    <property type="evidence" value="ECO:0007669"/>
    <property type="project" value="UniProtKB-UniRule"/>
</dbReference>
<dbReference type="GO" id="GO:0008360">
    <property type="term" value="P:regulation of cell shape"/>
    <property type="evidence" value="ECO:0007669"/>
    <property type="project" value="UniProtKB-KW"/>
</dbReference>
<dbReference type="GO" id="GO:0019277">
    <property type="term" value="P:UDP-N-acetylgalactosamine biosynthetic process"/>
    <property type="evidence" value="ECO:0007669"/>
    <property type="project" value="InterPro"/>
</dbReference>
<dbReference type="CDD" id="cd01555">
    <property type="entry name" value="UdpNAET"/>
    <property type="match status" value="1"/>
</dbReference>
<dbReference type="FunFam" id="3.65.10.10:FF:000001">
    <property type="entry name" value="UDP-N-acetylglucosamine 1-carboxyvinyltransferase"/>
    <property type="match status" value="1"/>
</dbReference>
<dbReference type="Gene3D" id="3.65.10.10">
    <property type="entry name" value="Enolpyruvate transferase domain"/>
    <property type="match status" value="2"/>
</dbReference>
<dbReference type="HAMAP" id="MF_00111">
    <property type="entry name" value="MurA"/>
    <property type="match status" value="1"/>
</dbReference>
<dbReference type="InterPro" id="IPR001986">
    <property type="entry name" value="Enolpyruvate_Tfrase_dom"/>
</dbReference>
<dbReference type="InterPro" id="IPR036968">
    <property type="entry name" value="Enolpyruvate_Tfrase_sf"/>
</dbReference>
<dbReference type="InterPro" id="IPR050068">
    <property type="entry name" value="MurA_subfamily"/>
</dbReference>
<dbReference type="InterPro" id="IPR013792">
    <property type="entry name" value="RNA3'P_cycl/enolpyr_Trfase_a/b"/>
</dbReference>
<dbReference type="InterPro" id="IPR005750">
    <property type="entry name" value="UDP_GlcNAc_COvinyl_MurA"/>
</dbReference>
<dbReference type="NCBIfam" id="TIGR01072">
    <property type="entry name" value="murA"/>
    <property type="match status" value="1"/>
</dbReference>
<dbReference type="NCBIfam" id="NF006873">
    <property type="entry name" value="PRK09369.1"/>
    <property type="match status" value="1"/>
</dbReference>
<dbReference type="PANTHER" id="PTHR43783">
    <property type="entry name" value="UDP-N-ACETYLGLUCOSAMINE 1-CARBOXYVINYLTRANSFERASE"/>
    <property type="match status" value="1"/>
</dbReference>
<dbReference type="PANTHER" id="PTHR43783:SF1">
    <property type="entry name" value="UDP-N-ACETYLGLUCOSAMINE 1-CARBOXYVINYLTRANSFERASE"/>
    <property type="match status" value="1"/>
</dbReference>
<dbReference type="Pfam" id="PF00275">
    <property type="entry name" value="EPSP_synthase"/>
    <property type="match status" value="1"/>
</dbReference>
<dbReference type="SUPFAM" id="SSF55205">
    <property type="entry name" value="EPT/RTPC-like"/>
    <property type="match status" value="1"/>
</dbReference>
<keyword id="KW-0131">Cell cycle</keyword>
<keyword id="KW-0132">Cell division</keyword>
<keyword id="KW-0133">Cell shape</keyword>
<keyword id="KW-0961">Cell wall biogenesis/degradation</keyword>
<keyword id="KW-0963">Cytoplasm</keyword>
<keyword id="KW-0573">Peptidoglycan synthesis</keyword>
<keyword id="KW-0670">Pyruvate</keyword>
<keyword id="KW-1185">Reference proteome</keyword>
<keyword id="KW-0808">Transferase</keyword>
<reference key="1">
    <citation type="journal article" date="2004" name="Proc. Natl. Acad. Sci. U.S.A.">
        <title>Structural flexibility in the Burkholderia mallei genome.</title>
        <authorList>
            <person name="Nierman W.C."/>
            <person name="DeShazer D."/>
            <person name="Kim H.S."/>
            <person name="Tettelin H."/>
            <person name="Nelson K.E."/>
            <person name="Feldblyum T.V."/>
            <person name="Ulrich R.L."/>
            <person name="Ronning C.M."/>
            <person name="Brinkac L.M."/>
            <person name="Daugherty S.C."/>
            <person name="Davidsen T.D."/>
            <person name="DeBoy R.T."/>
            <person name="Dimitrov G."/>
            <person name="Dodson R.J."/>
            <person name="Durkin A.S."/>
            <person name="Gwinn M.L."/>
            <person name="Haft D.H."/>
            <person name="Khouri H.M."/>
            <person name="Kolonay J.F."/>
            <person name="Madupu R."/>
            <person name="Mohammoud Y."/>
            <person name="Nelson W.C."/>
            <person name="Radune D."/>
            <person name="Romero C.M."/>
            <person name="Sarria S."/>
            <person name="Selengut J."/>
            <person name="Shamblin C."/>
            <person name="Sullivan S.A."/>
            <person name="White O."/>
            <person name="Yu Y."/>
            <person name="Zafar N."/>
            <person name="Zhou L."/>
            <person name="Fraser C.M."/>
        </authorList>
    </citation>
    <scope>NUCLEOTIDE SEQUENCE [LARGE SCALE GENOMIC DNA]</scope>
    <source>
        <strain>ATCC 23344</strain>
    </source>
</reference>
<feature type="chain" id="PRO_0000231181" description="UDP-N-acetylglucosamine 1-carboxyvinyltransferase">
    <location>
        <begin position="1"/>
        <end position="449"/>
    </location>
</feature>
<feature type="active site" description="Proton donor" evidence="1">
    <location>
        <position position="145"/>
    </location>
</feature>
<feature type="binding site" evidence="1">
    <location>
        <begin position="51"/>
        <end position="52"/>
    </location>
    <ligand>
        <name>phosphoenolpyruvate</name>
        <dbReference type="ChEBI" id="CHEBI:58702"/>
    </ligand>
</feature>
<feature type="binding site" evidence="1">
    <location>
        <position position="121"/>
    </location>
    <ligand>
        <name>UDP-N-acetyl-alpha-D-glucosamine</name>
        <dbReference type="ChEBI" id="CHEBI:57705"/>
    </ligand>
</feature>
<feature type="binding site" evidence="1">
    <location>
        <begin position="150"/>
        <end position="154"/>
    </location>
    <ligand>
        <name>UDP-N-acetyl-alpha-D-glucosamine</name>
        <dbReference type="ChEBI" id="CHEBI:57705"/>
    </ligand>
</feature>
<feature type="binding site" evidence="1">
    <location>
        <position position="333"/>
    </location>
    <ligand>
        <name>UDP-N-acetyl-alpha-D-glucosamine</name>
        <dbReference type="ChEBI" id="CHEBI:57705"/>
    </ligand>
</feature>
<feature type="binding site" evidence="1">
    <location>
        <position position="355"/>
    </location>
    <ligand>
        <name>UDP-N-acetyl-alpha-D-glucosamine</name>
        <dbReference type="ChEBI" id="CHEBI:57705"/>
    </ligand>
</feature>
<feature type="modified residue" description="2-(S-cysteinyl)pyruvic acid O-phosphothioketal" evidence="1">
    <location>
        <position position="145"/>
    </location>
</feature>
<proteinExistence type="inferred from homology"/>
<protein>
    <recommendedName>
        <fullName evidence="1">UDP-N-acetylglucosamine 1-carboxyvinyltransferase</fullName>
        <ecNumber evidence="1">2.5.1.7</ecNumber>
    </recommendedName>
    <alternativeName>
        <fullName evidence="1">Enoylpyruvate transferase</fullName>
    </alternativeName>
    <alternativeName>
        <fullName evidence="1">UDP-N-acetylglucosamine enolpyruvyl transferase</fullName>
        <shortName evidence="1">EPT</shortName>
    </alternativeName>
</protein>
<sequence length="449" mass="47230">MQVTVNEHDAVECVATATPAGNREAHAHGTDKLAIEGGRRLAGEIAVSGAKNAALPILCAGLLSAEPVRLDNVPDLKDVRTTLALLGQMGMREETDGARVVLDASRVDNPVAPYELVKTMRASILVLGPLLARFGYAKVSLPGGCAIGARPVDQHIKGLQAMGAEIHIEHGYIEARAKRLSGARIVTDMITVTGTENLLMAATLADGETVIENAAREPEVTDLAHLLVAMGAKIDGIGTDRLVIQGVERLHGATHAVIPDRIEAGTFLCAVAAAGGDVTLTGMRAHILDAVIDKLREAGATIDEGVDTLRVRMDGRPSAVAIRTSEYPAFPTDMQAQFMALNAVAQGAAQVTETIFENRFMHVQELNRLGANIAVDGNTALVTGVPKLSGASVMATDLRASASLVIAGLCAQGETLVERIYHLDRGYDRMETKLTAVGANVRRISGSEA</sequence>
<accession>Q62GD7</accession>